<proteinExistence type="inferred from homology"/>
<sequence>MKKTPLYEAHLRLGARMVDFAGYLLPLQYTSIVEEHLAVRRAVGVFDVSHMGEFLVRGKEALAFLQWATANDAGKLKVGRAQYSMLPNERGGVVDDIYLYRLGEEEYLMVVNAANIAKDLAHLQALAKGFRVELEDASERTALLALQGPKAASLLQGLTDLDLSQKRKNDVFPARVAGRPARLARTGYTGEDGFELFLAPEDAEPVFLALVEAGAKPAGLGARDSLRLEAGFPLYGHELTEETNPLCTPWAWVVKKEKAFLGKEAMLAQACRERLVGLVLEGGIPREGYRVLSGGRPVGRVTSGGYSPLLQRGIALAYVEEGAEGPFQVEVRGRAVPAALSPLPFVPLK</sequence>
<feature type="chain" id="PRO_0000122612" description="Aminomethyltransferase">
    <location>
        <begin position="1"/>
        <end position="349"/>
    </location>
</feature>
<dbReference type="EC" id="2.1.2.10" evidence="1"/>
<dbReference type="EMBL" id="AP008226">
    <property type="protein sequence ID" value="BAD70346.1"/>
    <property type="molecule type" value="Genomic_DNA"/>
</dbReference>
<dbReference type="RefSeq" id="WP_011228001.1">
    <property type="nucleotide sequence ID" value="NC_006461.1"/>
</dbReference>
<dbReference type="RefSeq" id="YP_143789.1">
    <property type="nucleotide sequence ID" value="NC_006461.1"/>
</dbReference>
<dbReference type="SMR" id="Q5SKX0"/>
<dbReference type="EnsemblBacteria" id="BAD70346">
    <property type="protein sequence ID" value="BAD70346"/>
    <property type="gene ID" value="BAD70346"/>
</dbReference>
<dbReference type="GeneID" id="3169106"/>
<dbReference type="KEGG" id="ttj:TTHA0523"/>
<dbReference type="PATRIC" id="fig|300852.9.peg.521"/>
<dbReference type="eggNOG" id="COG0404">
    <property type="taxonomic scope" value="Bacteria"/>
</dbReference>
<dbReference type="HOGENOM" id="CLU_007884_10_2_0"/>
<dbReference type="PhylomeDB" id="Q5SKX0"/>
<dbReference type="Proteomes" id="UP000000532">
    <property type="component" value="Chromosome"/>
</dbReference>
<dbReference type="GO" id="GO:0005829">
    <property type="term" value="C:cytosol"/>
    <property type="evidence" value="ECO:0007669"/>
    <property type="project" value="TreeGrafter"/>
</dbReference>
<dbReference type="GO" id="GO:0005960">
    <property type="term" value="C:glycine cleavage complex"/>
    <property type="evidence" value="ECO:0007669"/>
    <property type="project" value="InterPro"/>
</dbReference>
<dbReference type="GO" id="GO:0004047">
    <property type="term" value="F:aminomethyltransferase activity"/>
    <property type="evidence" value="ECO:0007669"/>
    <property type="project" value="UniProtKB-UniRule"/>
</dbReference>
<dbReference type="GO" id="GO:0008483">
    <property type="term" value="F:transaminase activity"/>
    <property type="evidence" value="ECO:0007669"/>
    <property type="project" value="UniProtKB-KW"/>
</dbReference>
<dbReference type="GO" id="GO:0019464">
    <property type="term" value="P:glycine decarboxylation via glycine cleavage system"/>
    <property type="evidence" value="ECO:0007669"/>
    <property type="project" value="UniProtKB-UniRule"/>
</dbReference>
<dbReference type="Gene3D" id="3.30.1360.120">
    <property type="entry name" value="Probable tRNA modification gtpase trme, domain 1"/>
    <property type="match status" value="1"/>
</dbReference>
<dbReference type="HAMAP" id="MF_00259">
    <property type="entry name" value="GcvT"/>
    <property type="match status" value="1"/>
</dbReference>
<dbReference type="InterPro" id="IPR006223">
    <property type="entry name" value="GCS_T"/>
</dbReference>
<dbReference type="InterPro" id="IPR022903">
    <property type="entry name" value="GCS_T_bac"/>
</dbReference>
<dbReference type="InterPro" id="IPR013977">
    <property type="entry name" value="GCST_C"/>
</dbReference>
<dbReference type="InterPro" id="IPR006222">
    <property type="entry name" value="GCV_T_N"/>
</dbReference>
<dbReference type="InterPro" id="IPR028896">
    <property type="entry name" value="GcvT/YgfZ/DmdA"/>
</dbReference>
<dbReference type="InterPro" id="IPR029043">
    <property type="entry name" value="GcvT/YgfZ_C"/>
</dbReference>
<dbReference type="InterPro" id="IPR027266">
    <property type="entry name" value="TrmE/GcvT_dom1"/>
</dbReference>
<dbReference type="NCBIfam" id="TIGR00528">
    <property type="entry name" value="gcvT"/>
    <property type="match status" value="1"/>
</dbReference>
<dbReference type="NCBIfam" id="NF001567">
    <property type="entry name" value="PRK00389.1"/>
    <property type="match status" value="1"/>
</dbReference>
<dbReference type="PANTHER" id="PTHR43757">
    <property type="entry name" value="AMINOMETHYLTRANSFERASE"/>
    <property type="match status" value="1"/>
</dbReference>
<dbReference type="PANTHER" id="PTHR43757:SF2">
    <property type="entry name" value="AMINOMETHYLTRANSFERASE, MITOCHONDRIAL"/>
    <property type="match status" value="1"/>
</dbReference>
<dbReference type="Pfam" id="PF01571">
    <property type="entry name" value="GCV_T"/>
    <property type="match status" value="1"/>
</dbReference>
<dbReference type="Pfam" id="PF08669">
    <property type="entry name" value="GCV_T_C"/>
    <property type="match status" value="1"/>
</dbReference>
<dbReference type="PIRSF" id="PIRSF006487">
    <property type="entry name" value="GcvT"/>
    <property type="match status" value="1"/>
</dbReference>
<dbReference type="SUPFAM" id="SSF101790">
    <property type="entry name" value="Aminomethyltransferase beta-barrel domain"/>
    <property type="match status" value="1"/>
</dbReference>
<dbReference type="SUPFAM" id="SSF103025">
    <property type="entry name" value="Folate-binding domain"/>
    <property type="match status" value="1"/>
</dbReference>
<organism>
    <name type="scientific">Thermus thermophilus (strain ATCC 27634 / DSM 579 / HB8)</name>
    <dbReference type="NCBI Taxonomy" id="300852"/>
    <lineage>
        <taxon>Bacteria</taxon>
        <taxon>Thermotogati</taxon>
        <taxon>Deinococcota</taxon>
        <taxon>Deinococci</taxon>
        <taxon>Thermales</taxon>
        <taxon>Thermaceae</taxon>
        <taxon>Thermus</taxon>
    </lineage>
</organism>
<evidence type="ECO:0000255" key="1">
    <source>
        <dbReference type="HAMAP-Rule" id="MF_00259"/>
    </source>
</evidence>
<name>GCST_THET8</name>
<protein>
    <recommendedName>
        <fullName evidence="1">Aminomethyltransferase</fullName>
        <ecNumber evidence="1">2.1.2.10</ecNumber>
    </recommendedName>
    <alternativeName>
        <fullName evidence="1">Glycine cleavage system T protein</fullName>
    </alternativeName>
</protein>
<keyword id="KW-0032">Aminotransferase</keyword>
<keyword id="KW-1185">Reference proteome</keyword>
<keyword id="KW-0808">Transferase</keyword>
<reference key="1">
    <citation type="submission" date="2004-11" db="EMBL/GenBank/DDBJ databases">
        <title>Complete genome sequence of Thermus thermophilus HB8.</title>
        <authorList>
            <person name="Masui R."/>
            <person name="Kurokawa K."/>
            <person name="Nakagawa N."/>
            <person name="Tokunaga F."/>
            <person name="Koyama Y."/>
            <person name="Shibata T."/>
            <person name="Oshima T."/>
            <person name="Yokoyama S."/>
            <person name="Yasunaga T."/>
            <person name="Kuramitsu S."/>
        </authorList>
    </citation>
    <scope>NUCLEOTIDE SEQUENCE [LARGE SCALE GENOMIC DNA]</scope>
    <source>
        <strain>ATCC 27634 / DSM 579 / HB8</strain>
    </source>
</reference>
<accession>Q5SKX0</accession>
<comment type="function">
    <text evidence="1">The glycine cleavage system catalyzes the degradation of glycine.</text>
</comment>
<comment type="catalytic activity">
    <reaction evidence="1">
        <text>N(6)-[(R)-S(8)-aminomethyldihydrolipoyl]-L-lysyl-[protein] + (6S)-5,6,7,8-tetrahydrofolate = N(6)-[(R)-dihydrolipoyl]-L-lysyl-[protein] + (6R)-5,10-methylene-5,6,7,8-tetrahydrofolate + NH4(+)</text>
        <dbReference type="Rhea" id="RHEA:16945"/>
        <dbReference type="Rhea" id="RHEA-COMP:10475"/>
        <dbReference type="Rhea" id="RHEA-COMP:10492"/>
        <dbReference type="ChEBI" id="CHEBI:15636"/>
        <dbReference type="ChEBI" id="CHEBI:28938"/>
        <dbReference type="ChEBI" id="CHEBI:57453"/>
        <dbReference type="ChEBI" id="CHEBI:83100"/>
        <dbReference type="ChEBI" id="CHEBI:83143"/>
        <dbReference type="EC" id="2.1.2.10"/>
    </reaction>
</comment>
<comment type="subunit">
    <text evidence="1">The glycine cleavage system is composed of four proteins: P, T, L and H.</text>
</comment>
<comment type="similarity">
    <text evidence="1">Belongs to the GcvT family.</text>
</comment>
<gene>
    <name evidence="1" type="primary">gcvT</name>
    <name type="ordered locus">TTHA0523</name>
</gene>